<keyword id="KW-0378">Hydrolase</keyword>
<keyword id="KW-0479">Metal-binding</keyword>
<keyword id="KW-0482">Metalloprotease</keyword>
<keyword id="KW-0645">Protease</keyword>
<keyword id="KW-0862">Zinc</keyword>
<name>Y5982_PSEFS</name>
<protein>
    <recommendedName>
        <fullName>UPF0758 protein PFLU_5982</fullName>
    </recommendedName>
</protein>
<gene>
    <name type="ordered locus">PFLU_5982</name>
</gene>
<sequence length="224" mass="24815">MSIRDWPAAERPREKLLEWGAASLSDAELLAIFLRTGVSGRSAVDLARHLLAQFGGLRPLLEASQALFNQQLGLGPAKFAQLQAVLEMAKRHMAERLRHDSVLESPKAVRDYLKAMLRHEPHEIFGCLFLDSRHRVLGFEALSQGTIDAAMVYPRQVVKRALAYNAAALILCHNHPSGSLEPSAADRKLTKLLQKALEVVDVRVLDHIIVGDGDPLSMAEYGWL</sequence>
<proteinExistence type="inferred from homology"/>
<accession>C3K471</accession>
<reference key="1">
    <citation type="journal article" date="2009" name="Genome Biol.">
        <title>Genomic and genetic analyses of diversity and plant interactions of Pseudomonas fluorescens.</title>
        <authorList>
            <person name="Silby M.W."/>
            <person name="Cerdeno-Tarraga A.M."/>
            <person name="Vernikos G.S."/>
            <person name="Giddens S.R."/>
            <person name="Jackson R.W."/>
            <person name="Preston G.M."/>
            <person name="Zhang X.-X."/>
            <person name="Moon C.D."/>
            <person name="Gehrig S.M."/>
            <person name="Godfrey S.A.C."/>
            <person name="Knight C.G."/>
            <person name="Malone J.G."/>
            <person name="Robinson Z."/>
            <person name="Spiers A.J."/>
            <person name="Harris S."/>
            <person name="Challis G.L."/>
            <person name="Yaxley A.M."/>
            <person name="Harris D."/>
            <person name="Seeger K."/>
            <person name="Murphy L."/>
            <person name="Rutter S."/>
            <person name="Squares R."/>
            <person name="Quail M.A."/>
            <person name="Saunders E."/>
            <person name="Mavromatis K."/>
            <person name="Brettin T.S."/>
            <person name="Bentley S.D."/>
            <person name="Hothersall J."/>
            <person name="Stephens E."/>
            <person name="Thomas C.M."/>
            <person name="Parkhill J."/>
            <person name="Levy S.B."/>
            <person name="Rainey P.B."/>
            <person name="Thomson N.R."/>
        </authorList>
    </citation>
    <scope>NUCLEOTIDE SEQUENCE [LARGE SCALE GENOMIC DNA]</scope>
    <source>
        <strain>SBW25</strain>
    </source>
</reference>
<feature type="chain" id="PRO_1000201880" description="UPF0758 protein PFLU_5982">
    <location>
        <begin position="1"/>
        <end position="224"/>
    </location>
</feature>
<feature type="domain" description="MPN" evidence="1">
    <location>
        <begin position="102"/>
        <end position="224"/>
    </location>
</feature>
<feature type="short sequence motif" description="JAMM motif" evidence="1">
    <location>
        <begin position="173"/>
        <end position="186"/>
    </location>
</feature>
<feature type="binding site" evidence="1">
    <location>
        <position position="173"/>
    </location>
    <ligand>
        <name>Zn(2+)</name>
        <dbReference type="ChEBI" id="CHEBI:29105"/>
        <note>catalytic</note>
    </ligand>
</feature>
<feature type="binding site" evidence="1">
    <location>
        <position position="175"/>
    </location>
    <ligand>
        <name>Zn(2+)</name>
        <dbReference type="ChEBI" id="CHEBI:29105"/>
        <note>catalytic</note>
    </ligand>
</feature>
<feature type="binding site" evidence="1">
    <location>
        <position position="186"/>
    </location>
    <ligand>
        <name>Zn(2+)</name>
        <dbReference type="ChEBI" id="CHEBI:29105"/>
        <note>catalytic</note>
    </ligand>
</feature>
<organism>
    <name type="scientific">Pseudomonas fluorescens (strain SBW25)</name>
    <dbReference type="NCBI Taxonomy" id="216595"/>
    <lineage>
        <taxon>Bacteria</taxon>
        <taxon>Pseudomonadati</taxon>
        <taxon>Pseudomonadota</taxon>
        <taxon>Gammaproteobacteria</taxon>
        <taxon>Pseudomonadales</taxon>
        <taxon>Pseudomonadaceae</taxon>
        <taxon>Pseudomonas</taxon>
    </lineage>
</organism>
<dbReference type="EMBL" id="AM181176">
    <property type="protein sequence ID" value="CAY53505.1"/>
    <property type="molecule type" value="Genomic_DNA"/>
</dbReference>
<dbReference type="SMR" id="C3K471"/>
<dbReference type="STRING" id="294.SRM1_05678"/>
<dbReference type="eggNOG" id="COG2003">
    <property type="taxonomic scope" value="Bacteria"/>
</dbReference>
<dbReference type="HOGENOM" id="CLU_073529_0_1_6"/>
<dbReference type="OrthoDB" id="9804482at2"/>
<dbReference type="GO" id="GO:0046872">
    <property type="term" value="F:metal ion binding"/>
    <property type="evidence" value="ECO:0007669"/>
    <property type="project" value="UniProtKB-KW"/>
</dbReference>
<dbReference type="GO" id="GO:0008237">
    <property type="term" value="F:metallopeptidase activity"/>
    <property type="evidence" value="ECO:0007669"/>
    <property type="project" value="UniProtKB-KW"/>
</dbReference>
<dbReference type="GO" id="GO:0006508">
    <property type="term" value="P:proteolysis"/>
    <property type="evidence" value="ECO:0007669"/>
    <property type="project" value="UniProtKB-KW"/>
</dbReference>
<dbReference type="CDD" id="cd08071">
    <property type="entry name" value="MPN_DUF2466"/>
    <property type="match status" value="1"/>
</dbReference>
<dbReference type="Gene3D" id="3.40.140.10">
    <property type="entry name" value="Cytidine Deaminase, domain 2"/>
    <property type="match status" value="1"/>
</dbReference>
<dbReference type="InterPro" id="IPR037518">
    <property type="entry name" value="MPN"/>
</dbReference>
<dbReference type="InterPro" id="IPR025657">
    <property type="entry name" value="RadC_JAB"/>
</dbReference>
<dbReference type="InterPro" id="IPR010994">
    <property type="entry name" value="RuvA_2-like"/>
</dbReference>
<dbReference type="InterPro" id="IPR001405">
    <property type="entry name" value="UPF0758"/>
</dbReference>
<dbReference type="InterPro" id="IPR020891">
    <property type="entry name" value="UPF0758_CS"/>
</dbReference>
<dbReference type="InterPro" id="IPR046778">
    <property type="entry name" value="UPF0758_N"/>
</dbReference>
<dbReference type="NCBIfam" id="NF000642">
    <property type="entry name" value="PRK00024.1"/>
    <property type="match status" value="1"/>
</dbReference>
<dbReference type="NCBIfam" id="TIGR00608">
    <property type="entry name" value="radc"/>
    <property type="match status" value="1"/>
</dbReference>
<dbReference type="PANTHER" id="PTHR30471">
    <property type="entry name" value="DNA REPAIR PROTEIN RADC"/>
    <property type="match status" value="1"/>
</dbReference>
<dbReference type="PANTHER" id="PTHR30471:SF3">
    <property type="entry name" value="UPF0758 PROTEIN YEES-RELATED"/>
    <property type="match status" value="1"/>
</dbReference>
<dbReference type="Pfam" id="PF04002">
    <property type="entry name" value="RadC"/>
    <property type="match status" value="1"/>
</dbReference>
<dbReference type="Pfam" id="PF20582">
    <property type="entry name" value="UPF0758_N"/>
    <property type="match status" value="1"/>
</dbReference>
<dbReference type="SUPFAM" id="SSF102712">
    <property type="entry name" value="JAB1/MPN domain"/>
    <property type="match status" value="1"/>
</dbReference>
<dbReference type="SUPFAM" id="SSF47781">
    <property type="entry name" value="RuvA domain 2-like"/>
    <property type="match status" value="1"/>
</dbReference>
<dbReference type="PROSITE" id="PS50249">
    <property type="entry name" value="MPN"/>
    <property type="match status" value="1"/>
</dbReference>
<dbReference type="PROSITE" id="PS01302">
    <property type="entry name" value="UPF0758"/>
    <property type="match status" value="1"/>
</dbReference>
<evidence type="ECO:0000255" key="1">
    <source>
        <dbReference type="PROSITE-ProRule" id="PRU01182"/>
    </source>
</evidence>
<evidence type="ECO:0000305" key="2"/>
<comment type="similarity">
    <text evidence="2">Belongs to the UPF0758 family.</text>
</comment>